<gene>
    <name evidence="1" type="primary">tchp</name>
</gene>
<reference evidence="5" key="1">
    <citation type="submission" date="2006-10" db="EMBL/GenBank/DDBJ databases">
        <authorList>
            <consortium name="NIH - Xenopus Gene Collection (XGC) project"/>
        </authorList>
    </citation>
    <scope>NUCLEOTIDE SEQUENCE [LARGE SCALE MRNA]</scope>
    <source>
        <tissue evidence="4">Embryo</tissue>
        <tissue evidence="5">Fat body</tissue>
    </source>
</reference>
<dbReference type="EMBL" id="BC042932">
    <property type="protein sequence ID" value="AAH42932.1"/>
    <property type="status" value="ALT_SEQ"/>
    <property type="molecule type" value="mRNA"/>
</dbReference>
<dbReference type="EMBL" id="BC124854">
    <property type="protein sequence ID" value="AAI24855.1"/>
    <property type="molecule type" value="mRNA"/>
</dbReference>
<dbReference type="RefSeq" id="NP_001082520.1">
    <property type="nucleotide sequence ID" value="NM_001089051.1"/>
</dbReference>
<dbReference type="SMR" id="A0AUT1"/>
<dbReference type="DNASU" id="398528"/>
<dbReference type="GeneID" id="398528"/>
<dbReference type="KEGG" id="xla:398528"/>
<dbReference type="AGR" id="Xenbase:XB-GENE-963792"/>
<dbReference type="CTD" id="398528"/>
<dbReference type="Xenbase" id="XB-GENE-963792">
    <property type="gene designation" value="tchp.L"/>
</dbReference>
<dbReference type="OMA" id="QNSHYFR"/>
<dbReference type="OrthoDB" id="6431598at2759"/>
<dbReference type="Proteomes" id="UP000186698">
    <property type="component" value="Chromosome 1L"/>
</dbReference>
<dbReference type="Bgee" id="398528">
    <property type="expression patterns" value="Expressed in testis and 19 other cell types or tissues"/>
</dbReference>
<dbReference type="GO" id="GO:0005813">
    <property type="term" value="C:centrosome"/>
    <property type="evidence" value="ECO:0000250"/>
    <property type="project" value="UniProtKB"/>
</dbReference>
<dbReference type="GO" id="GO:0005737">
    <property type="term" value="C:cytoplasm"/>
    <property type="evidence" value="ECO:0007669"/>
    <property type="project" value="UniProtKB-KW"/>
</dbReference>
<dbReference type="GO" id="GO:0045095">
    <property type="term" value="C:keratin filament"/>
    <property type="evidence" value="ECO:0000318"/>
    <property type="project" value="GO_Central"/>
</dbReference>
<dbReference type="GO" id="GO:0006915">
    <property type="term" value="P:apoptotic process"/>
    <property type="evidence" value="ECO:0000318"/>
    <property type="project" value="GO_Central"/>
</dbReference>
<dbReference type="InterPro" id="IPR043596">
    <property type="entry name" value="CFAP53/TCHP"/>
</dbReference>
<dbReference type="InterPro" id="IPR043597">
    <property type="entry name" value="TPH_dom"/>
</dbReference>
<dbReference type="PANTHER" id="PTHR31183:SF2">
    <property type="entry name" value="TRICHOPLEIN KERATIN FILAMENT-BINDING PROTEIN"/>
    <property type="match status" value="1"/>
</dbReference>
<dbReference type="PANTHER" id="PTHR31183">
    <property type="entry name" value="TRICHOPLEIN KERATIN FILAMENT-BINDING PROTEIN FAMILY MEMBER"/>
    <property type="match status" value="1"/>
</dbReference>
<dbReference type="Pfam" id="PF13868">
    <property type="entry name" value="TPH"/>
    <property type="match status" value="1"/>
</dbReference>
<protein>
    <recommendedName>
        <fullName>Trichoplein keratin filament-binding protein</fullName>
        <shortName>Protein TCHP</shortName>
    </recommendedName>
</protein>
<sequence>MALPTLPSNWHSRSRVLEQQIVRQREQEARLRHQWDQTNQYFKQSNVCSSKQAQWSSRQSYQKSMNAFHQEKQKEEKKKTLEYRREQLRKLLQEERDLLEEELKELRCNKEHNVSDMRQRTEELKSAREERQKQLAEELLYEQWKKNNVKLREVESSLFKKHVVDAWGEQITARNQEKEEEDMEKKRLENEYELARREAIERMKRDKEKRQQQEEELARVLKWQMEELKLKDLEAKKLKKEQEDLLRQQWEIEELEEERRKMEQCRKKTELSHFLSRQYNAQMKRRAQQVQEELEMDKKILSALISKEDEDQHLQSARREQAIADVAWMKHVIEEQLHLERQREAELDTLFREEAKQVWAKRETEWERERNARNRLMKEVLAGRQMQIQERIERNQLAQAESVMNRERLLRQLEEARQFTSREKKQEEEQKTARRTELEAQIAEQLLKGKEAIVQQEEEEKEFKLAEDLENDLLQQEAEIMTQRGYQKKTYSRPRTAWS</sequence>
<evidence type="ECO:0000250" key="1">
    <source>
        <dbReference type="UniProtKB" id="Q9BT92"/>
    </source>
</evidence>
<evidence type="ECO:0000255" key="2"/>
<evidence type="ECO:0000305" key="3"/>
<evidence type="ECO:0000312" key="4">
    <source>
        <dbReference type="EMBL" id="AAH42932.1"/>
    </source>
</evidence>
<evidence type="ECO:0000312" key="5">
    <source>
        <dbReference type="EMBL" id="AAI24855.1"/>
    </source>
</evidence>
<feature type="chain" id="PRO_0000292613" description="Trichoplein keratin filament-binding protein">
    <location>
        <begin position="1"/>
        <end position="499"/>
    </location>
</feature>
<feature type="region of interest" description="Trichohyalin/plectin homology domain" evidence="1">
    <location>
        <begin position="260"/>
        <end position="426"/>
    </location>
</feature>
<feature type="coiled-coil region" evidence="2">
    <location>
        <begin position="17"/>
        <end position="143"/>
    </location>
</feature>
<feature type="coiled-coil region" evidence="2">
    <location>
        <begin position="169"/>
        <end position="304"/>
    </location>
</feature>
<feature type="coiled-coil region" evidence="2">
    <location>
        <begin position="405"/>
        <end position="485"/>
    </location>
</feature>
<feature type="sequence conflict" description="In Ref. 1; AAH42932." evidence="3" ref="1">
    <original>K</original>
    <variation>I</variation>
    <location>
        <position position="43"/>
    </location>
</feature>
<proteinExistence type="evidence at transcript level"/>
<comment type="function">
    <text evidence="1">May act as a 'capping' or 'branching' protein for keratin filaments in the cell periphery. May regulate K8/K18 filament and desmosome organization mainly at the apical or peripheral regions of simple epithelial cells (By similarity).</text>
</comment>
<comment type="subcellular location">
    <subcellularLocation>
        <location evidence="1">Cytoplasm</location>
        <location evidence="1">Cytoskeleton</location>
    </subcellularLocation>
    <subcellularLocation>
        <location evidence="1">Cytoplasm</location>
        <location evidence="1">Cytoskeleton</location>
        <location evidence="1">Microtubule organizing center</location>
        <location evidence="1">Centrosome</location>
    </subcellularLocation>
</comment>
<comment type="similarity">
    <text evidence="3">Belongs to the TCHP family.</text>
</comment>
<comment type="sequence caution" evidence="3">
    <conflict type="miscellaneous discrepancy">
        <sequence resource="EMBL-CDS" id="AAH42932"/>
    </conflict>
    <text>Contaminating sequence. Potential poly-A sequence starting in position 426.</text>
</comment>
<keyword id="KW-0175">Coiled coil</keyword>
<keyword id="KW-0963">Cytoplasm</keyword>
<keyword id="KW-0206">Cytoskeleton</keyword>
<keyword id="KW-1185">Reference proteome</keyword>
<accession>A0AUT1</accession>
<accession>Q7ZYN5</accession>
<name>TCHP_XENLA</name>
<organism>
    <name type="scientific">Xenopus laevis</name>
    <name type="common">African clawed frog</name>
    <dbReference type="NCBI Taxonomy" id="8355"/>
    <lineage>
        <taxon>Eukaryota</taxon>
        <taxon>Metazoa</taxon>
        <taxon>Chordata</taxon>
        <taxon>Craniata</taxon>
        <taxon>Vertebrata</taxon>
        <taxon>Euteleostomi</taxon>
        <taxon>Amphibia</taxon>
        <taxon>Batrachia</taxon>
        <taxon>Anura</taxon>
        <taxon>Pipoidea</taxon>
        <taxon>Pipidae</taxon>
        <taxon>Xenopodinae</taxon>
        <taxon>Xenopus</taxon>
        <taxon>Xenopus</taxon>
    </lineage>
</organism>